<comment type="function">
    <text evidence="1">Catalyzes the oxidative decarboxylation of 6-phosphogluconate to ribulose 5-phosphate and CO(2), with concomitant reduction of NADP to NADPH.</text>
</comment>
<comment type="catalytic activity">
    <reaction>
        <text>6-phospho-D-gluconate + NADP(+) = D-ribulose 5-phosphate + CO2 + NADPH</text>
        <dbReference type="Rhea" id="RHEA:10116"/>
        <dbReference type="ChEBI" id="CHEBI:16526"/>
        <dbReference type="ChEBI" id="CHEBI:57783"/>
        <dbReference type="ChEBI" id="CHEBI:58121"/>
        <dbReference type="ChEBI" id="CHEBI:58349"/>
        <dbReference type="ChEBI" id="CHEBI:58759"/>
        <dbReference type="EC" id="1.1.1.44"/>
    </reaction>
</comment>
<comment type="pathway">
    <text>Carbohydrate degradation; pentose phosphate pathway; D-ribulose 5-phosphate from D-glucose 6-phosphate (oxidative stage): step 3/3.</text>
</comment>
<comment type="subunit">
    <text evidence="1">Homodimer.</text>
</comment>
<comment type="similarity">
    <text evidence="2">Belongs to the 6-phosphogluconate dehydrogenase family.</text>
</comment>
<evidence type="ECO:0000250" key="1"/>
<evidence type="ECO:0000305" key="2"/>
<organism>
    <name type="scientific">Staphylococcus aureus (strain MSSA476)</name>
    <dbReference type="NCBI Taxonomy" id="282459"/>
    <lineage>
        <taxon>Bacteria</taxon>
        <taxon>Bacillati</taxon>
        <taxon>Bacillota</taxon>
        <taxon>Bacilli</taxon>
        <taxon>Bacillales</taxon>
        <taxon>Staphylococcaceae</taxon>
        <taxon>Staphylococcus</taxon>
    </lineage>
</organism>
<sequence>MTQQIGVIGLAVMGKNLAWNIESRGYSVSVFNRSSEKTDLMVEESKGKNIHPTYSLEEFVNSLEKPRKILLMVQAGKATDATIDSLLPLLDDGDILIDGGNTNYQDTIRRNKALAQSAINFIGMGVSGGEIGALTGPSLMPGGQEEAYNKVADILDAIAAKAKDGASCVTYIGPNGAGHYVKMVHNGIEYADMQLIAESYAMMKELLGMSHEDIAQTFKDWNAGELESYLIEITGDIFMKLDENKEALVEKILDTAGQKGTGKWTSINALELGIPLTIITESVFARFISSIKEERVNASKELNGPKASFDGDKKDFLEKIRKALYMSKICSYAQGFAQMRKASEDNEWNLKLGDLAMIWREGCIIRAQFLQKIKDAYDNNPGLQNLLLDPYFKNIVTEYQDALRDVVATGVQNGVPTPGFSSSINYYDSYRAADLPANLIQAQRDYFGAHTYERKDKEGVFHTQWIEE</sequence>
<gene>
    <name type="primary">gnd</name>
    <name type="ordered locus">SAS1450</name>
</gene>
<dbReference type="EC" id="1.1.1.44"/>
<dbReference type="EMBL" id="BX571857">
    <property type="protein sequence ID" value="CAG43229.1"/>
    <property type="molecule type" value="Genomic_DNA"/>
</dbReference>
<dbReference type="SMR" id="Q6G954"/>
<dbReference type="KEGG" id="sas:SAS1450"/>
<dbReference type="HOGENOM" id="CLU_024540_4_2_9"/>
<dbReference type="UniPathway" id="UPA00115">
    <property type="reaction ID" value="UER00410"/>
</dbReference>
<dbReference type="GO" id="GO:0050661">
    <property type="term" value="F:NADP binding"/>
    <property type="evidence" value="ECO:0007669"/>
    <property type="project" value="InterPro"/>
</dbReference>
<dbReference type="GO" id="GO:0004616">
    <property type="term" value="F:phosphogluconate dehydrogenase (decarboxylating) activity"/>
    <property type="evidence" value="ECO:0007669"/>
    <property type="project" value="UniProtKB-EC"/>
</dbReference>
<dbReference type="GO" id="GO:0019521">
    <property type="term" value="P:D-gluconate metabolic process"/>
    <property type="evidence" value="ECO:0007669"/>
    <property type="project" value="UniProtKB-KW"/>
</dbReference>
<dbReference type="GO" id="GO:0016054">
    <property type="term" value="P:organic acid catabolic process"/>
    <property type="evidence" value="ECO:0007669"/>
    <property type="project" value="UniProtKB-ARBA"/>
</dbReference>
<dbReference type="GO" id="GO:0006098">
    <property type="term" value="P:pentose-phosphate shunt"/>
    <property type="evidence" value="ECO:0007669"/>
    <property type="project" value="UniProtKB-UniPathway"/>
</dbReference>
<dbReference type="FunFam" id="1.10.1040.10:FF:000002">
    <property type="entry name" value="6-phosphogluconate dehydrogenase, decarboxylating"/>
    <property type="match status" value="1"/>
</dbReference>
<dbReference type="FunFam" id="1.20.5.320:FF:000001">
    <property type="entry name" value="6-phosphogluconate dehydrogenase, decarboxylating"/>
    <property type="match status" value="1"/>
</dbReference>
<dbReference type="FunFam" id="3.40.50.720:FF:000007">
    <property type="entry name" value="6-phosphogluconate dehydrogenase, decarboxylating"/>
    <property type="match status" value="1"/>
</dbReference>
<dbReference type="Gene3D" id="1.20.5.320">
    <property type="entry name" value="6-Phosphogluconate Dehydrogenase, domain 3"/>
    <property type="match status" value="1"/>
</dbReference>
<dbReference type="Gene3D" id="1.10.1040.10">
    <property type="entry name" value="N-(1-d-carboxylethyl)-l-norvaline Dehydrogenase, domain 2"/>
    <property type="match status" value="1"/>
</dbReference>
<dbReference type="Gene3D" id="3.40.50.720">
    <property type="entry name" value="NAD(P)-binding Rossmann-like Domain"/>
    <property type="match status" value="1"/>
</dbReference>
<dbReference type="InterPro" id="IPR008927">
    <property type="entry name" value="6-PGluconate_DH-like_C_sf"/>
</dbReference>
<dbReference type="InterPro" id="IPR013328">
    <property type="entry name" value="6PGD_dom2"/>
</dbReference>
<dbReference type="InterPro" id="IPR006114">
    <property type="entry name" value="6PGDH_C"/>
</dbReference>
<dbReference type="InterPro" id="IPR006113">
    <property type="entry name" value="6PGDH_Gnd/GntZ"/>
</dbReference>
<dbReference type="InterPro" id="IPR006115">
    <property type="entry name" value="6PGDH_NADP-bd"/>
</dbReference>
<dbReference type="InterPro" id="IPR006184">
    <property type="entry name" value="6PGdom_BS"/>
</dbReference>
<dbReference type="InterPro" id="IPR036291">
    <property type="entry name" value="NAD(P)-bd_dom_sf"/>
</dbReference>
<dbReference type="InterPro" id="IPR006183">
    <property type="entry name" value="Pgluconate_DH"/>
</dbReference>
<dbReference type="NCBIfam" id="TIGR00873">
    <property type="entry name" value="gnd"/>
    <property type="match status" value="1"/>
</dbReference>
<dbReference type="NCBIfam" id="NF006765">
    <property type="entry name" value="PRK09287.1"/>
    <property type="match status" value="1"/>
</dbReference>
<dbReference type="PANTHER" id="PTHR11811">
    <property type="entry name" value="6-PHOSPHOGLUCONATE DEHYDROGENASE"/>
    <property type="match status" value="1"/>
</dbReference>
<dbReference type="Pfam" id="PF00393">
    <property type="entry name" value="6PGD"/>
    <property type="match status" value="1"/>
</dbReference>
<dbReference type="Pfam" id="PF03446">
    <property type="entry name" value="NAD_binding_2"/>
    <property type="match status" value="1"/>
</dbReference>
<dbReference type="PIRSF" id="PIRSF000109">
    <property type="entry name" value="6PGD"/>
    <property type="match status" value="1"/>
</dbReference>
<dbReference type="PRINTS" id="PR00076">
    <property type="entry name" value="6PGDHDRGNASE"/>
</dbReference>
<dbReference type="SMART" id="SM01350">
    <property type="entry name" value="6PGD"/>
    <property type="match status" value="1"/>
</dbReference>
<dbReference type="SUPFAM" id="SSF48179">
    <property type="entry name" value="6-phosphogluconate dehydrogenase C-terminal domain-like"/>
    <property type="match status" value="1"/>
</dbReference>
<dbReference type="SUPFAM" id="SSF51735">
    <property type="entry name" value="NAD(P)-binding Rossmann-fold domains"/>
    <property type="match status" value="1"/>
</dbReference>
<dbReference type="PROSITE" id="PS00461">
    <property type="entry name" value="6PGD"/>
    <property type="match status" value="1"/>
</dbReference>
<accession>Q6G954</accession>
<keyword id="KW-0311">Gluconate utilization</keyword>
<keyword id="KW-0521">NADP</keyword>
<keyword id="KW-0560">Oxidoreductase</keyword>
<keyword id="KW-0570">Pentose shunt</keyword>
<feature type="chain" id="PRO_0000090056" description="6-phosphogluconate dehydrogenase, decarboxylating">
    <location>
        <begin position="1"/>
        <end position="468"/>
    </location>
</feature>
<feature type="active site" description="Proton acceptor" evidence="1">
    <location>
        <position position="182"/>
    </location>
</feature>
<feature type="active site" description="Proton donor" evidence="1">
    <location>
        <position position="189"/>
    </location>
</feature>
<feature type="binding site" evidence="1">
    <location>
        <begin position="9"/>
        <end position="14"/>
    </location>
    <ligand>
        <name>NADP(+)</name>
        <dbReference type="ChEBI" id="CHEBI:58349"/>
    </ligand>
</feature>
<feature type="binding site" evidence="1">
    <location>
        <begin position="32"/>
        <end position="34"/>
    </location>
    <ligand>
        <name>NADP(+)</name>
        <dbReference type="ChEBI" id="CHEBI:58349"/>
    </ligand>
</feature>
<feature type="binding site" evidence="1">
    <location>
        <begin position="73"/>
        <end position="75"/>
    </location>
    <ligand>
        <name>NADP(+)</name>
        <dbReference type="ChEBI" id="CHEBI:58349"/>
    </ligand>
</feature>
<feature type="binding site" evidence="1">
    <location>
        <position position="101"/>
    </location>
    <ligand>
        <name>NADP(+)</name>
        <dbReference type="ChEBI" id="CHEBI:58349"/>
    </ligand>
</feature>
<feature type="binding site" description="in other chain" evidence="1">
    <location>
        <position position="101"/>
    </location>
    <ligand>
        <name>substrate</name>
        <note>ligand shared between dimeric partners</note>
    </ligand>
</feature>
<feature type="binding site" description="in other chain" evidence="1">
    <location>
        <begin position="127"/>
        <end position="129"/>
    </location>
    <ligand>
        <name>substrate</name>
        <note>ligand shared between dimeric partners</note>
    </ligand>
</feature>
<feature type="binding site" description="in other chain" evidence="1">
    <location>
        <begin position="185"/>
        <end position="186"/>
    </location>
    <ligand>
        <name>substrate</name>
        <note>ligand shared between dimeric partners</note>
    </ligand>
</feature>
<feature type="binding site" description="in other chain" evidence="1">
    <location>
        <position position="190"/>
    </location>
    <ligand>
        <name>substrate</name>
        <note>ligand shared between dimeric partners</note>
    </ligand>
</feature>
<feature type="binding site" description="in other chain" evidence="1">
    <location>
        <position position="259"/>
    </location>
    <ligand>
        <name>substrate</name>
        <note>ligand shared between dimeric partners</note>
    </ligand>
</feature>
<feature type="binding site" description="in other chain" evidence="1">
    <location>
        <position position="286"/>
    </location>
    <ligand>
        <name>substrate</name>
        <note>ligand shared between dimeric partners</note>
    </ligand>
</feature>
<feature type="binding site" evidence="1">
    <location>
        <position position="444"/>
    </location>
    <ligand>
        <name>substrate</name>
        <note>ligand shared between dimeric partners</note>
    </ligand>
</feature>
<feature type="binding site" evidence="1">
    <location>
        <position position="450"/>
    </location>
    <ligand>
        <name>substrate</name>
        <note>ligand shared between dimeric partners</note>
    </ligand>
</feature>
<protein>
    <recommendedName>
        <fullName>6-phosphogluconate dehydrogenase, decarboxylating</fullName>
        <ecNumber>1.1.1.44</ecNumber>
    </recommendedName>
</protein>
<reference key="1">
    <citation type="journal article" date="2004" name="Proc. Natl. Acad. Sci. U.S.A.">
        <title>Complete genomes of two clinical Staphylococcus aureus strains: evidence for the rapid evolution of virulence and drug resistance.</title>
        <authorList>
            <person name="Holden M.T.G."/>
            <person name="Feil E.J."/>
            <person name="Lindsay J.A."/>
            <person name="Peacock S.J."/>
            <person name="Day N.P.J."/>
            <person name="Enright M.C."/>
            <person name="Foster T.J."/>
            <person name="Moore C.E."/>
            <person name="Hurst L."/>
            <person name="Atkin R."/>
            <person name="Barron A."/>
            <person name="Bason N."/>
            <person name="Bentley S.D."/>
            <person name="Chillingworth C."/>
            <person name="Chillingworth T."/>
            <person name="Churcher C."/>
            <person name="Clark L."/>
            <person name="Corton C."/>
            <person name="Cronin A."/>
            <person name="Doggett J."/>
            <person name="Dowd L."/>
            <person name="Feltwell T."/>
            <person name="Hance Z."/>
            <person name="Harris B."/>
            <person name="Hauser H."/>
            <person name="Holroyd S."/>
            <person name="Jagels K."/>
            <person name="James K.D."/>
            <person name="Lennard N."/>
            <person name="Line A."/>
            <person name="Mayes R."/>
            <person name="Moule S."/>
            <person name="Mungall K."/>
            <person name="Ormond D."/>
            <person name="Quail M.A."/>
            <person name="Rabbinowitsch E."/>
            <person name="Rutherford K.M."/>
            <person name="Sanders M."/>
            <person name="Sharp S."/>
            <person name="Simmonds M."/>
            <person name="Stevens K."/>
            <person name="Whitehead S."/>
            <person name="Barrell B.G."/>
            <person name="Spratt B.G."/>
            <person name="Parkhill J."/>
        </authorList>
    </citation>
    <scope>NUCLEOTIDE SEQUENCE [LARGE SCALE GENOMIC DNA]</scope>
    <source>
        <strain>MSSA476</strain>
    </source>
</reference>
<name>6PGD_STAAS</name>
<proteinExistence type="inferred from homology"/>